<reference key="1">
    <citation type="journal article" date="2004" name="Proc. Natl. Acad. Sci. U.S.A.">
        <title>Genome sequence of the enterobacterial phytopathogen Erwinia carotovora subsp. atroseptica and characterization of virulence factors.</title>
        <authorList>
            <person name="Bell K.S."/>
            <person name="Sebaihia M."/>
            <person name="Pritchard L."/>
            <person name="Holden M.T.G."/>
            <person name="Hyman L.J."/>
            <person name="Holeva M.C."/>
            <person name="Thomson N.R."/>
            <person name="Bentley S.D."/>
            <person name="Churcher L.J.C."/>
            <person name="Mungall K."/>
            <person name="Atkin R."/>
            <person name="Bason N."/>
            <person name="Brooks K."/>
            <person name="Chillingworth T."/>
            <person name="Clark K."/>
            <person name="Doggett J."/>
            <person name="Fraser A."/>
            <person name="Hance Z."/>
            <person name="Hauser H."/>
            <person name="Jagels K."/>
            <person name="Moule S."/>
            <person name="Norbertczak H."/>
            <person name="Ormond D."/>
            <person name="Price C."/>
            <person name="Quail M.A."/>
            <person name="Sanders M."/>
            <person name="Walker D."/>
            <person name="Whitehead S."/>
            <person name="Salmond G.P.C."/>
            <person name="Birch P.R.J."/>
            <person name="Parkhill J."/>
            <person name="Toth I.K."/>
        </authorList>
    </citation>
    <scope>NUCLEOTIDE SEQUENCE [LARGE SCALE GENOMIC DNA]</scope>
    <source>
        <strain>SCRI 1043 / ATCC BAA-672</strain>
    </source>
</reference>
<sequence length="347" mass="38770">MNEPLKPRVTFDDVSPQEPQPQLRAGLAFDEQSSTPFSPISREEEVPEEGAAEEAISAALRPKRSLWRRMVMAGVALFGISALAQGVQSLHNAWVQQDWIALGGITAGSLIVAAGVGSLAVEWRRLYRLRERAEERDMARDLLHSHGVERGREFCEKLARQAGLDSGHPAIQRWQASLHETHNDREVLELYARLVQPVLDTQARREISRSAAESTLMIAVSPLALVDMAFIAWRNLRLINRIAALYGIELGYFSRIRLFRLVLINIAFAGASELVREIGMDWMSQDLAARLSTRAAQGIGAGLLTARLGIKAMELCRPLPWLDDKPRLGDFRRELIGQVKETLQKGR</sequence>
<evidence type="ECO:0000255" key="1">
    <source>
        <dbReference type="HAMAP-Rule" id="MF_01085"/>
    </source>
</evidence>
<evidence type="ECO:0000256" key="2">
    <source>
        <dbReference type="SAM" id="MobiDB-lite"/>
    </source>
</evidence>
<feature type="chain" id="PRO_1000064841" description="UPF0283 membrane protein ECA1987">
    <location>
        <begin position="1"/>
        <end position="347"/>
    </location>
</feature>
<feature type="transmembrane region" description="Helical" evidence="1">
    <location>
        <begin position="70"/>
        <end position="90"/>
    </location>
</feature>
<feature type="transmembrane region" description="Helical" evidence="1">
    <location>
        <begin position="99"/>
        <end position="119"/>
    </location>
</feature>
<feature type="transmembrane region" description="Helical" evidence="1">
    <location>
        <begin position="213"/>
        <end position="233"/>
    </location>
</feature>
<feature type="region of interest" description="Disordered" evidence="2">
    <location>
        <begin position="1"/>
        <end position="48"/>
    </location>
</feature>
<feature type="compositionally biased region" description="Basic and acidic residues" evidence="2">
    <location>
        <begin position="1"/>
        <end position="11"/>
    </location>
</feature>
<proteinExistence type="inferred from homology"/>
<dbReference type="EMBL" id="BX950851">
    <property type="protein sequence ID" value="CAG74888.1"/>
    <property type="molecule type" value="Genomic_DNA"/>
</dbReference>
<dbReference type="RefSeq" id="WP_011093549.1">
    <property type="nucleotide sequence ID" value="NC_004547.2"/>
</dbReference>
<dbReference type="STRING" id="218491.ECA1987"/>
<dbReference type="GeneID" id="57209311"/>
<dbReference type="KEGG" id="eca:ECA1987"/>
<dbReference type="PATRIC" id="fig|218491.5.peg.2024"/>
<dbReference type="eggNOG" id="COG3768">
    <property type="taxonomic scope" value="Bacteria"/>
</dbReference>
<dbReference type="HOGENOM" id="CLU_057693_2_0_6"/>
<dbReference type="OrthoDB" id="958025at2"/>
<dbReference type="Proteomes" id="UP000007966">
    <property type="component" value="Chromosome"/>
</dbReference>
<dbReference type="GO" id="GO:0005886">
    <property type="term" value="C:plasma membrane"/>
    <property type="evidence" value="ECO:0007669"/>
    <property type="project" value="UniProtKB-SubCell"/>
</dbReference>
<dbReference type="HAMAP" id="MF_01085">
    <property type="entry name" value="UPF0283"/>
    <property type="match status" value="1"/>
</dbReference>
<dbReference type="InterPro" id="IPR021147">
    <property type="entry name" value="DUF697"/>
</dbReference>
<dbReference type="InterPro" id="IPR006507">
    <property type="entry name" value="UPF0283"/>
</dbReference>
<dbReference type="NCBIfam" id="TIGR01620">
    <property type="entry name" value="hyp_HI0043"/>
    <property type="match status" value="1"/>
</dbReference>
<dbReference type="PANTHER" id="PTHR39342">
    <property type="entry name" value="UPF0283 MEMBRANE PROTEIN YCJF"/>
    <property type="match status" value="1"/>
</dbReference>
<dbReference type="PANTHER" id="PTHR39342:SF1">
    <property type="entry name" value="UPF0283 MEMBRANE PROTEIN YCJF"/>
    <property type="match status" value="1"/>
</dbReference>
<dbReference type="Pfam" id="PF05128">
    <property type="entry name" value="DUF697"/>
    <property type="match status" value="1"/>
</dbReference>
<name>Y1987_PECAS</name>
<accession>Q6D5Q4</accession>
<organism>
    <name type="scientific">Pectobacterium atrosepticum (strain SCRI 1043 / ATCC BAA-672)</name>
    <name type="common">Erwinia carotovora subsp. atroseptica</name>
    <dbReference type="NCBI Taxonomy" id="218491"/>
    <lineage>
        <taxon>Bacteria</taxon>
        <taxon>Pseudomonadati</taxon>
        <taxon>Pseudomonadota</taxon>
        <taxon>Gammaproteobacteria</taxon>
        <taxon>Enterobacterales</taxon>
        <taxon>Pectobacteriaceae</taxon>
        <taxon>Pectobacterium</taxon>
    </lineage>
</organism>
<keyword id="KW-0997">Cell inner membrane</keyword>
<keyword id="KW-1003">Cell membrane</keyword>
<keyword id="KW-0472">Membrane</keyword>
<keyword id="KW-1185">Reference proteome</keyword>
<keyword id="KW-0812">Transmembrane</keyword>
<keyword id="KW-1133">Transmembrane helix</keyword>
<protein>
    <recommendedName>
        <fullName evidence="1">UPF0283 membrane protein ECA1987</fullName>
    </recommendedName>
</protein>
<gene>
    <name type="ordered locus">ECA1987</name>
</gene>
<comment type="subcellular location">
    <subcellularLocation>
        <location evidence="1">Cell inner membrane</location>
        <topology evidence="1">Multi-pass membrane protein</topology>
    </subcellularLocation>
</comment>
<comment type="similarity">
    <text evidence="1">Belongs to the UPF0283 family.</text>
</comment>